<gene>
    <name evidence="1" type="primary">ftsZ</name>
    <name type="ordered locus">RP666</name>
</gene>
<keyword id="KW-0131">Cell cycle</keyword>
<keyword id="KW-0132">Cell division</keyword>
<keyword id="KW-0963">Cytoplasm</keyword>
<keyword id="KW-0342">GTP-binding</keyword>
<keyword id="KW-0547">Nucleotide-binding</keyword>
<keyword id="KW-1185">Reference proteome</keyword>
<keyword id="KW-0717">Septation</keyword>
<name>FTSZ_RICPR</name>
<feature type="chain" id="PRO_0000114376" description="Cell division protein FtsZ">
    <location>
        <begin position="1"/>
        <end position="452"/>
    </location>
</feature>
<feature type="binding site" evidence="1">
    <location>
        <begin position="24"/>
        <end position="28"/>
    </location>
    <ligand>
        <name>GTP</name>
        <dbReference type="ChEBI" id="CHEBI:37565"/>
    </ligand>
</feature>
<feature type="binding site" evidence="1">
    <location>
        <begin position="111"/>
        <end position="113"/>
    </location>
    <ligand>
        <name>GTP</name>
        <dbReference type="ChEBI" id="CHEBI:37565"/>
    </ligand>
</feature>
<feature type="binding site" evidence="1">
    <location>
        <position position="142"/>
    </location>
    <ligand>
        <name>GTP</name>
        <dbReference type="ChEBI" id="CHEBI:37565"/>
    </ligand>
</feature>
<feature type="binding site" evidence="1">
    <location>
        <position position="146"/>
    </location>
    <ligand>
        <name>GTP</name>
        <dbReference type="ChEBI" id="CHEBI:37565"/>
    </ligand>
</feature>
<feature type="binding site" evidence="1">
    <location>
        <position position="190"/>
    </location>
    <ligand>
        <name>GTP</name>
        <dbReference type="ChEBI" id="CHEBI:37565"/>
    </ligand>
</feature>
<dbReference type="EMBL" id="AJ235272">
    <property type="protein sequence ID" value="CAA15104.1"/>
    <property type="molecule type" value="Genomic_DNA"/>
</dbReference>
<dbReference type="PIR" id="F71672">
    <property type="entry name" value="F71672"/>
</dbReference>
<dbReference type="RefSeq" id="NP_221028.1">
    <property type="nucleotide sequence ID" value="NC_000963.1"/>
</dbReference>
<dbReference type="RefSeq" id="WP_004596189.1">
    <property type="nucleotide sequence ID" value="NC_000963.1"/>
</dbReference>
<dbReference type="SMR" id="Q9ZCQ3"/>
<dbReference type="STRING" id="272947.gene:17555743"/>
<dbReference type="EnsemblBacteria" id="CAA15104">
    <property type="protein sequence ID" value="CAA15104"/>
    <property type="gene ID" value="CAA15104"/>
</dbReference>
<dbReference type="KEGG" id="rpr:RP666"/>
<dbReference type="PATRIC" id="fig|272947.5.peg.686"/>
<dbReference type="eggNOG" id="COG0206">
    <property type="taxonomic scope" value="Bacteria"/>
</dbReference>
<dbReference type="HOGENOM" id="CLU_024865_0_4_5"/>
<dbReference type="OrthoDB" id="9813375at2"/>
<dbReference type="Proteomes" id="UP000002480">
    <property type="component" value="Chromosome"/>
</dbReference>
<dbReference type="GO" id="GO:0032153">
    <property type="term" value="C:cell division site"/>
    <property type="evidence" value="ECO:0007669"/>
    <property type="project" value="UniProtKB-UniRule"/>
</dbReference>
<dbReference type="GO" id="GO:0005737">
    <property type="term" value="C:cytoplasm"/>
    <property type="evidence" value="ECO:0007669"/>
    <property type="project" value="UniProtKB-SubCell"/>
</dbReference>
<dbReference type="GO" id="GO:0005525">
    <property type="term" value="F:GTP binding"/>
    <property type="evidence" value="ECO:0007669"/>
    <property type="project" value="UniProtKB-UniRule"/>
</dbReference>
<dbReference type="GO" id="GO:0003924">
    <property type="term" value="F:GTPase activity"/>
    <property type="evidence" value="ECO:0007669"/>
    <property type="project" value="UniProtKB-UniRule"/>
</dbReference>
<dbReference type="GO" id="GO:0000917">
    <property type="term" value="P:division septum assembly"/>
    <property type="evidence" value="ECO:0007669"/>
    <property type="project" value="UniProtKB-KW"/>
</dbReference>
<dbReference type="GO" id="GO:0043093">
    <property type="term" value="P:FtsZ-dependent cytokinesis"/>
    <property type="evidence" value="ECO:0007669"/>
    <property type="project" value="UniProtKB-UniRule"/>
</dbReference>
<dbReference type="GO" id="GO:0051258">
    <property type="term" value="P:protein polymerization"/>
    <property type="evidence" value="ECO:0007669"/>
    <property type="project" value="UniProtKB-UniRule"/>
</dbReference>
<dbReference type="CDD" id="cd02201">
    <property type="entry name" value="FtsZ_type1"/>
    <property type="match status" value="1"/>
</dbReference>
<dbReference type="FunFam" id="3.30.1330.20:FF:000011">
    <property type="entry name" value="Cell division protein FtsZ"/>
    <property type="match status" value="1"/>
</dbReference>
<dbReference type="FunFam" id="3.40.50.1440:FF:000001">
    <property type="entry name" value="Cell division protein FtsZ"/>
    <property type="match status" value="1"/>
</dbReference>
<dbReference type="Gene3D" id="3.30.1330.20">
    <property type="entry name" value="Tubulin/FtsZ, C-terminal domain"/>
    <property type="match status" value="1"/>
</dbReference>
<dbReference type="Gene3D" id="3.40.50.1440">
    <property type="entry name" value="Tubulin/FtsZ, GTPase domain"/>
    <property type="match status" value="1"/>
</dbReference>
<dbReference type="HAMAP" id="MF_00909">
    <property type="entry name" value="FtsZ"/>
    <property type="match status" value="1"/>
</dbReference>
<dbReference type="InterPro" id="IPR000158">
    <property type="entry name" value="Cell_div_FtsZ"/>
</dbReference>
<dbReference type="InterPro" id="IPR020805">
    <property type="entry name" value="Cell_div_FtsZ_CS"/>
</dbReference>
<dbReference type="InterPro" id="IPR045061">
    <property type="entry name" value="FtsZ/CetZ"/>
</dbReference>
<dbReference type="InterPro" id="IPR024757">
    <property type="entry name" value="FtsZ_C"/>
</dbReference>
<dbReference type="InterPro" id="IPR008280">
    <property type="entry name" value="Tub_FtsZ_C"/>
</dbReference>
<dbReference type="InterPro" id="IPR037103">
    <property type="entry name" value="Tubulin/FtsZ-like_C"/>
</dbReference>
<dbReference type="InterPro" id="IPR018316">
    <property type="entry name" value="Tubulin/FtsZ_2-layer-sand-dom"/>
</dbReference>
<dbReference type="InterPro" id="IPR036525">
    <property type="entry name" value="Tubulin/FtsZ_GTPase_sf"/>
</dbReference>
<dbReference type="InterPro" id="IPR003008">
    <property type="entry name" value="Tubulin_FtsZ_GTPase"/>
</dbReference>
<dbReference type="NCBIfam" id="TIGR00065">
    <property type="entry name" value="ftsZ"/>
    <property type="match status" value="1"/>
</dbReference>
<dbReference type="PANTHER" id="PTHR30314">
    <property type="entry name" value="CELL DIVISION PROTEIN FTSZ-RELATED"/>
    <property type="match status" value="1"/>
</dbReference>
<dbReference type="PANTHER" id="PTHR30314:SF3">
    <property type="entry name" value="MITOCHONDRIAL DIVISION PROTEIN FSZA"/>
    <property type="match status" value="1"/>
</dbReference>
<dbReference type="Pfam" id="PF12327">
    <property type="entry name" value="FtsZ_C"/>
    <property type="match status" value="1"/>
</dbReference>
<dbReference type="Pfam" id="PF00091">
    <property type="entry name" value="Tubulin"/>
    <property type="match status" value="1"/>
</dbReference>
<dbReference type="PRINTS" id="PR00423">
    <property type="entry name" value="CELLDVISFTSZ"/>
</dbReference>
<dbReference type="SMART" id="SM00864">
    <property type="entry name" value="Tubulin"/>
    <property type="match status" value="1"/>
</dbReference>
<dbReference type="SMART" id="SM00865">
    <property type="entry name" value="Tubulin_C"/>
    <property type="match status" value="1"/>
</dbReference>
<dbReference type="SUPFAM" id="SSF55307">
    <property type="entry name" value="Tubulin C-terminal domain-like"/>
    <property type="match status" value="1"/>
</dbReference>
<dbReference type="SUPFAM" id="SSF52490">
    <property type="entry name" value="Tubulin nucleotide-binding domain-like"/>
    <property type="match status" value="1"/>
</dbReference>
<dbReference type="PROSITE" id="PS01134">
    <property type="entry name" value="FTSZ_1"/>
    <property type="match status" value="1"/>
</dbReference>
<dbReference type="PROSITE" id="PS01135">
    <property type="entry name" value="FTSZ_2"/>
    <property type="match status" value="1"/>
</dbReference>
<organism>
    <name type="scientific">Rickettsia prowazekii (strain Madrid E)</name>
    <dbReference type="NCBI Taxonomy" id="272947"/>
    <lineage>
        <taxon>Bacteria</taxon>
        <taxon>Pseudomonadati</taxon>
        <taxon>Pseudomonadota</taxon>
        <taxon>Alphaproteobacteria</taxon>
        <taxon>Rickettsiales</taxon>
        <taxon>Rickettsiaceae</taxon>
        <taxon>Rickettsieae</taxon>
        <taxon>Rickettsia</taxon>
        <taxon>typhus group</taxon>
    </lineage>
</organism>
<proteinExistence type="inferred from homology"/>
<comment type="function">
    <text evidence="1">Essential cell division protein that forms a contractile ring structure (Z ring) at the future cell division site. The regulation of the ring assembly controls the timing and the location of cell division. One of the functions of the FtsZ ring is to recruit other cell division proteins to the septum to produce a new cell wall between the dividing cells. Binds GTP and shows GTPase activity.</text>
</comment>
<comment type="subunit">
    <text evidence="1">Homodimer. Polymerizes to form a dynamic ring structure in a strictly GTP-dependent manner. Interacts directly with several other division proteins.</text>
</comment>
<comment type="subcellular location">
    <subcellularLocation>
        <location evidence="1">Cytoplasm</location>
    </subcellularLocation>
    <text evidence="1">Assembles at midcell at the inner surface of the cytoplasmic membrane.</text>
</comment>
<comment type="similarity">
    <text evidence="1">Belongs to the FtsZ family.</text>
</comment>
<accession>Q9ZCQ3</accession>
<sequence length="452" mass="48806">MVLNIKAPENIVLKPTITVFGVGGAGSNAVNNMIHANLQGANFVVANTDAQSLEHSLCINKIQLGVSTTRGLGAGASPEVGALAAQESENEIRSSLENSNMVFITAGMGGGTGTGSAPIIARIAKELGILTVGVVTKPFHFEGGHRMKTADKGLIELQQFVDTLIVIPNQNLFRIANEQTTFADAFKMADDVLHAGVRGVTDLMIMPGLINLDFADIKAVMSEMGKAMMGTGEDSGEDRAIKAAESAISNPLLDHSSMCGARGVLINITGGPDMTLFEVDNAANRIREEVDNIDANIIFGSTFNPELKGIIRVSVVATGIDADKVPKYKLAIDKNTNTLPEETYNESIIQHTQIETIPSFNSYSTENIEINESSIKQDYTGNEQELRLHVNAVNKPENNSQKSSFLGKIWESLRTSNNQTLERKNVIVNTVDQDNKESDIHDIPAFLRKKRD</sequence>
<protein>
    <recommendedName>
        <fullName evidence="1">Cell division protein FtsZ</fullName>
    </recommendedName>
</protein>
<evidence type="ECO:0000255" key="1">
    <source>
        <dbReference type="HAMAP-Rule" id="MF_00909"/>
    </source>
</evidence>
<reference key="1">
    <citation type="journal article" date="1998" name="Nature">
        <title>The genome sequence of Rickettsia prowazekii and the origin of mitochondria.</title>
        <authorList>
            <person name="Andersson S.G.E."/>
            <person name="Zomorodipour A."/>
            <person name="Andersson J.O."/>
            <person name="Sicheritz-Ponten T."/>
            <person name="Alsmark U.C.M."/>
            <person name="Podowski R.M."/>
            <person name="Naeslund A.K."/>
            <person name="Eriksson A.-S."/>
            <person name="Winkler H.H."/>
            <person name="Kurland C.G."/>
        </authorList>
    </citation>
    <scope>NUCLEOTIDE SEQUENCE [LARGE SCALE GENOMIC DNA]</scope>
    <source>
        <strain>Madrid E</strain>
    </source>
</reference>